<proteinExistence type="inferred from homology"/>
<reference key="1">
    <citation type="submission" date="2007-05" db="EMBL/GenBank/DDBJ databases">
        <title>Complete sequence of Pseudomonas putida F1.</title>
        <authorList>
            <consortium name="US DOE Joint Genome Institute"/>
            <person name="Copeland A."/>
            <person name="Lucas S."/>
            <person name="Lapidus A."/>
            <person name="Barry K."/>
            <person name="Detter J.C."/>
            <person name="Glavina del Rio T."/>
            <person name="Hammon N."/>
            <person name="Israni S."/>
            <person name="Dalin E."/>
            <person name="Tice H."/>
            <person name="Pitluck S."/>
            <person name="Chain P."/>
            <person name="Malfatti S."/>
            <person name="Shin M."/>
            <person name="Vergez L."/>
            <person name="Schmutz J."/>
            <person name="Larimer F."/>
            <person name="Land M."/>
            <person name="Hauser L."/>
            <person name="Kyrpides N."/>
            <person name="Lykidis A."/>
            <person name="Parales R."/>
            <person name="Richardson P."/>
        </authorList>
    </citation>
    <scope>NUCLEOTIDE SEQUENCE [LARGE SCALE GENOMIC DNA]</scope>
    <source>
        <strain>ATCC 700007 / DSM 6899 / JCM 31910 / BCRC 17059 / LMG 24140 / F1</strain>
    </source>
</reference>
<dbReference type="EC" id="2.7.1.148" evidence="1"/>
<dbReference type="EMBL" id="CP000712">
    <property type="protein sequence ID" value="ABQ76921.1"/>
    <property type="molecule type" value="Genomic_DNA"/>
</dbReference>
<dbReference type="SMR" id="A5VYG1"/>
<dbReference type="KEGG" id="ppf:Pput_0757"/>
<dbReference type="eggNOG" id="COG1947">
    <property type="taxonomic scope" value="Bacteria"/>
</dbReference>
<dbReference type="HOGENOM" id="CLU_053057_3_0_6"/>
<dbReference type="UniPathway" id="UPA00056">
    <property type="reaction ID" value="UER00094"/>
</dbReference>
<dbReference type="GO" id="GO:0050515">
    <property type="term" value="F:4-(cytidine 5'-diphospho)-2-C-methyl-D-erythritol kinase activity"/>
    <property type="evidence" value="ECO:0007669"/>
    <property type="project" value="UniProtKB-UniRule"/>
</dbReference>
<dbReference type="GO" id="GO:0005524">
    <property type="term" value="F:ATP binding"/>
    <property type="evidence" value="ECO:0007669"/>
    <property type="project" value="UniProtKB-UniRule"/>
</dbReference>
<dbReference type="GO" id="GO:0019288">
    <property type="term" value="P:isopentenyl diphosphate biosynthetic process, methylerythritol 4-phosphate pathway"/>
    <property type="evidence" value="ECO:0007669"/>
    <property type="project" value="UniProtKB-UniRule"/>
</dbReference>
<dbReference type="GO" id="GO:0016114">
    <property type="term" value="P:terpenoid biosynthetic process"/>
    <property type="evidence" value="ECO:0007669"/>
    <property type="project" value="InterPro"/>
</dbReference>
<dbReference type="FunFam" id="3.30.230.10:FF:000022">
    <property type="entry name" value="4-diphosphocytidyl-2-C-methyl-D-erythritol kinase"/>
    <property type="match status" value="1"/>
</dbReference>
<dbReference type="Gene3D" id="3.30.230.10">
    <property type="match status" value="1"/>
</dbReference>
<dbReference type="Gene3D" id="3.30.70.890">
    <property type="entry name" value="GHMP kinase, C-terminal domain"/>
    <property type="match status" value="1"/>
</dbReference>
<dbReference type="HAMAP" id="MF_00061">
    <property type="entry name" value="IspE"/>
    <property type="match status" value="1"/>
</dbReference>
<dbReference type="InterPro" id="IPR013750">
    <property type="entry name" value="GHMP_kinase_C_dom"/>
</dbReference>
<dbReference type="InterPro" id="IPR036554">
    <property type="entry name" value="GHMP_kinase_C_sf"/>
</dbReference>
<dbReference type="InterPro" id="IPR006204">
    <property type="entry name" value="GHMP_kinase_N_dom"/>
</dbReference>
<dbReference type="InterPro" id="IPR004424">
    <property type="entry name" value="IspE"/>
</dbReference>
<dbReference type="InterPro" id="IPR020568">
    <property type="entry name" value="Ribosomal_Su5_D2-typ_SF"/>
</dbReference>
<dbReference type="InterPro" id="IPR014721">
    <property type="entry name" value="Ribsml_uS5_D2-typ_fold_subgr"/>
</dbReference>
<dbReference type="NCBIfam" id="TIGR00154">
    <property type="entry name" value="ispE"/>
    <property type="match status" value="1"/>
</dbReference>
<dbReference type="PANTHER" id="PTHR43527">
    <property type="entry name" value="4-DIPHOSPHOCYTIDYL-2-C-METHYL-D-ERYTHRITOL KINASE, CHLOROPLASTIC"/>
    <property type="match status" value="1"/>
</dbReference>
<dbReference type="PANTHER" id="PTHR43527:SF2">
    <property type="entry name" value="4-DIPHOSPHOCYTIDYL-2-C-METHYL-D-ERYTHRITOL KINASE, CHLOROPLASTIC"/>
    <property type="match status" value="1"/>
</dbReference>
<dbReference type="Pfam" id="PF08544">
    <property type="entry name" value="GHMP_kinases_C"/>
    <property type="match status" value="1"/>
</dbReference>
<dbReference type="Pfam" id="PF00288">
    <property type="entry name" value="GHMP_kinases_N"/>
    <property type="match status" value="1"/>
</dbReference>
<dbReference type="PIRSF" id="PIRSF010376">
    <property type="entry name" value="IspE"/>
    <property type="match status" value="1"/>
</dbReference>
<dbReference type="SUPFAM" id="SSF55060">
    <property type="entry name" value="GHMP Kinase, C-terminal domain"/>
    <property type="match status" value="1"/>
</dbReference>
<dbReference type="SUPFAM" id="SSF54211">
    <property type="entry name" value="Ribosomal protein S5 domain 2-like"/>
    <property type="match status" value="1"/>
</dbReference>
<keyword id="KW-0067">ATP-binding</keyword>
<keyword id="KW-0414">Isoprene biosynthesis</keyword>
<keyword id="KW-0418">Kinase</keyword>
<keyword id="KW-0547">Nucleotide-binding</keyword>
<keyword id="KW-0808">Transferase</keyword>
<feature type="chain" id="PRO_1000007877" description="4-diphosphocytidyl-2-C-methyl-D-erythritol kinase">
    <location>
        <begin position="1"/>
        <end position="286"/>
    </location>
</feature>
<feature type="active site" evidence="1">
    <location>
        <position position="11"/>
    </location>
</feature>
<feature type="active site" evidence="1">
    <location>
        <position position="136"/>
    </location>
</feature>
<feature type="binding site" evidence="1">
    <location>
        <begin position="94"/>
        <end position="104"/>
    </location>
    <ligand>
        <name>ATP</name>
        <dbReference type="ChEBI" id="CHEBI:30616"/>
    </ligand>
</feature>
<sequence length="286" mass="30913">MQKLTLPAPAKLNLWLHIIGRRADGYHELETVFQFLDHGDELSFALRDDGVIRLHTEIEAVPHDSNLIVRAARMLQAQSGTTLGADIWLTKVLPMGGGIGGGSSDAATTLLALAHLWQLDWDEDRLAALGLSLGADVPVFVRGHAAFAQGVGEQLTPVDPIEPWYVVLVPQVSVSTVEIFSHPQLTRDSLPLKMRPVPEGNSRNDCQPVVEQNYPQVRNALNSLGKFTEARLTGTGSCVFGAFPSKAEADKVLALLSATQTGFVAKGSNISMLHRKLQSLVKKSSA</sequence>
<organism>
    <name type="scientific">Pseudomonas putida (strain ATCC 700007 / DSM 6899 / JCM 31910 / BCRC 17059 / LMG 24140 / F1)</name>
    <dbReference type="NCBI Taxonomy" id="351746"/>
    <lineage>
        <taxon>Bacteria</taxon>
        <taxon>Pseudomonadati</taxon>
        <taxon>Pseudomonadota</taxon>
        <taxon>Gammaproteobacteria</taxon>
        <taxon>Pseudomonadales</taxon>
        <taxon>Pseudomonadaceae</taxon>
        <taxon>Pseudomonas</taxon>
    </lineage>
</organism>
<protein>
    <recommendedName>
        <fullName evidence="1">4-diphosphocytidyl-2-C-methyl-D-erythritol kinase</fullName>
        <shortName evidence="1">CMK</shortName>
        <ecNumber evidence="1">2.7.1.148</ecNumber>
    </recommendedName>
    <alternativeName>
        <fullName evidence="1">4-(cytidine-5'-diphospho)-2-C-methyl-D-erythritol kinase</fullName>
    </alternativeName>
</protein>
<comment type="function">
    <text evidence="1">Catalyzes the phosphorylation of the position 2 hydroxy group of 4-diphosphocytidyl-2C-methyl-D-erythritol.</text>
</comment>
<comment type="catalytic activity">
    <reaction evidence="1">
        <text>4-CDP-2-C-methyl-D-erythritol + ATP = 4-CDP-2-C-methyl-D-erythritol 2-phosphate + ADP + H(+)</text>
        <dbReference type="Rhea" id="RHEA:18437"/>
        <dbReference type="ChEBI" id="CHEBI:15378"/>
        <dbReference type="ChEBI" id="CHEBI:30616"/>
        <dbReference type="ChEBI" id="CHEBI:57823"/>
        <dbReference type="ChEBI" id="CHEBI:57919"/>
        <dbReference type="ChEBI" id="CHEBI:456216"/>
        <dbReference type="EC" id="2.7.1.148"/>
    </reaction>
</comment>
<comment type="pathway">
    <text evidence="1">Isoprenoid biosynthesis; isopentenyl diphosphate biosynthesis via DXP pathway; isopentenyl diphosphate from 1-deoxy-D-xylulose 5-phosphate: step 3/6.</text>
</comment>
<comment type="similarity">
    <text evidence="1">Belongs to the GHMP kinase family. IspE subfamily.</text>
</comment>
<evidence type="ECO:0000255" key="1">
    <source>
        <dbReference type="HAMAP-Rule" id="MF_00061"/>
    </source>
</evidence>
<name>ISPE_PSEP1</name>
<gene>
    <name evidence="1" type="primary">ispE</name>
    <name type="ordered locus">Pput_0757</name>
</gene>
<accession>A5VYG1</accession>